<evidence type="ECO:0000250" key="1">
    <source>
        <dbReference type="UniProtKB" id="P02739"/>
    </source>
</evidence>
<evidence type="ECO:0000250" key="2">
    <source>
        <dbReference type="UniProtKB" id="P05366"/>
    </source>
</evidence>
<evidence type="ECO:0000250" key="3">
    <source>
        <dbReference type="UniProtKB" id="P0DJI8"/>
    </source>
</evidence>
<evidence type="ECO:0000256" key="4">
    <source>
        <dbReference type="SAM" id="MobiDB-lite"/>
    </source>
</evidence>
<evidence type="ECO:0000269" key="5">
    <source>
    </source>
</evidence>
<evidence type="ECO:0000305" key="6"/>
<name>SAA2_RABIT</name>
<feature type="signal peptide" evidence="1">
    <location>
        <begin position="1"/>
        <end position="18"/>
    </location>
</feature>
<feature type="chain" id="PRO_0000031597" description="Serum amyloid A-2 protein">
    <location>
        <begin position="19"/>
        <end position="122"/>
    </location>
</feature>
<feature type="chain" id="PRO_0000450363" description="Amyloid protein AA1" evidence="1">
    <location>
        <begin position="19"/>
        <end position="83"/>
    </location>
</feature>
<feature type="chain" id="PRO_0000450364" description="Amyloid protein AA2" evidence="1">
    <location>
        <begin position="19"/>
        <end position="72"/>
    </location>
</feature>
<feature type="region of interest" description="Disordered" evidence="4">
    <location>
        <begin position="90"/>
        <end position="122"/>
    </location>
</feature>
<feature type="compositionally biased region" description="Basic and acidic residues" evidence="4">
    <location>
        <begin position="105"/>
        <end position="122"/>
    </location>
</feature>
<feature type="modified residue" description="Pyrrolidone carboxylic acid" evidence="1">
    <location>
        <position position="19"/>
    </location>
</feature>
<feature type="sequence variant">
    <original>A</original>
    <variation>D</variation>
    <location>
        <position position="96"/>
    </location>
</feature>
<keyword id="KW-0011">Acute phase</keyword>
<keyword id="KW-0034">Amyloid</keyword>
<keyword id="KW-0345">HDL</keyword>
<keyword id="KW-0873">Pyrrolidone carboxylic acid</keyword>
<keyword id="KW-1185">Reference proteome</keyword>
<keyword id="KW-0964">Secreted</keyword>
<keyword id="KW-0732">Signal</keyword>
<comment type="function">
    <text evidence="2">Major acute phase reactant.</text>
</comment>
<comment type="subunit">
    <text evidence="3">Apolipoprotein of the HDL complex.</text>
</comment>
<comment type="subcellular location">
    <subcellularLocation>
        <location evidence="3">Secreted</location>
    </subcellularLocation>
</comment>
<comment type="tissue specificity">
    <text evidence="5">Expressed by the liver; secreted in plasma.</text>
</comment>
<comment type="similarity">
    <text evidence="6">Belongs to the SAA family.</text>
</comment>
<organism>
    <name type="scientific">Oryctolagus cuniculus</name>
    <name type="common">Rabbit</name>
    <dbReference type="NCBI Taxonomy" id="9986"/>
    <lineage>
        <taxon>Eukaryota</taxon>
        <taxon>Metazoa</taxon>
        <taxon>Chordata</taxon>
        <taxon>Craniata</taxon>
        <taxon>Vertebrata</taxon>
        <taxon>Euteleostomi</taxon>
        <taxon>Mammalia</taxon>
        <taxon>Eutheria</taxon>
        <taxon>Euarchontoglires</taxon>
        <taxon>Glires</taxon>
        <taxon>Lagomorpha</taxon>
        <taxon>Leporidae</taxon>
        <taxon>Oryctolagus</taxon>
    </lineage>
</organism>
<protein>
    <recommendedName>
        <fullName>Serum amyloid A-2 protein</fullName>
    </recommendedName>
    <component>
        <recommendedName>
            <fullName evidence="1">Amyloid protein AA1</fullName>
        </recommendedName>
        <alternativeName>
            <fullName evidence="1">Protein AA1</fullName>
            <shortName evidence="1">AA1</shortName>
        </alternativeName>
    </component>
    <component>
        <recommendedName>
            <fullName evidence="1">Amyloid protein AA2</fullName>
        </recommendedName>
        <alternativeName>
            <fullName evidence="1">Protein AA2</fullName>
            <shortName evidence="1">AA2</shortName>
        </alternativeName>
    </component>
</protein>
<accession>P22000</accession>
<reference key="1">
    <citation type="journal article" date="1990" name="Nucleic Acids Res.">
        <title>Molecular cloning, nucleotide sequence heterozygosity and regulation of rabbit serum amyloid A cDNA.</title>
        <authorList>
            <person name="Tatum F."/>
            <person name="Alam J."/>
            <person name="Smith A."/>
            <person name="Morgan W.T."/>
        </authorList>
    </citation>
    <scope>NUCLEOTIDE SEQUENCE [MRNA]</scope>
    <scope>TISSUE SPECIFICITY</scope>
    <scope>VARIANT ASP-96</scope>
    <source>
        <tissue>Liver</tissue>
    </source>
</reference>
<reference key="2">
    <citation type="journal article" date="1991" name="Biochem. Biophys. Res. Commun.">
        <title>Complementary DNA cloning and nucleotide sequence of rabbit serum amyloid A protein.</title>
        <authorList>
            <person name="Ray B.K."/>
            <person name="Ray A."/>
        </authorList>
    </citation>
    <scope>NUCLEOTIDE SEQUENCE [MRNA]</scope>
</reference>
<reference key="3">
    <citation type="journal article" date="1991" name="Scand. J. Immunol.">
        <title>Rabbit serum amyloid protein A: expression and primary structure deduced from cDNA sequences.</title>
        <authorList>
            <person name="Rygg M."/>
            <person name="Marhaug G."/>
            <person name="Husby G."/>
            <person name="Dowton S.B."/>
        </authorList>
    </citation>
    <scope>NUCLEOTIDE SEQUENCE [MRNA]</scope>
</reference>
<sequence>MKLLSGLLLCSLVLGVSGQGWFSFIGEAVRGAGDMWRAYSDMREANYINADKYFHARGNYDAAQRGPGGVWAAKVISDVREDLQRLMGHGAEDSMADQAANEWGRSGKDPNHFRPKGLPDKY</sequence>
<gene>
    <name type="primary">SAA2</name>
</gene>
<dbReference type="EMBL" id="X16428">
    <property type="protein sequence ID" value="CAA34451.1"/>
    <property type="molecule type" value="mRNA"/>
</dbReference>
<dbReference type="EMBL" id="X16427">
    <property type="protein sequence ID" value="CAA34450.1"/>
    <property type="molecule type" value="mRNA"/>
</dbReference>
<dbReference type="EMBL" id="S71725">
    <property type="protein sequence ID" value="AAB20617.1"/>
    <property type="molecule type" value="mRNA"/>
</dbReference>
<dbReference type="PIR" id="I46982">
    <property type="entry name" value="I46982"/>
</dbReference>
<dbReference type="RefSeq" id="NP_001075861.1">
    <property type="nucleotide sequence ID" value="NM_001082392.1"/>
</dbReference>
<dbReference type="SMR" id="P22000"/>
<dbReference type="STRING" id="9986.ENSOCUP00000027056"/>
<dbReference type="PaxDb" id="9986-ENSOCUP00000015130"/>
<dbReference type="GeneID" id="100009259"/>
<dbReference type="KEGG" id="ocu:100009259"/>
<dbReference type="eggNOG" id="ENOG502S4PB">
    <property type="taxonomic scope" value="Eukaryota"/>
</dbReference>
<dbReference type="InParanoid" id="P22000"/>
<dbReference type="OrthoDB" id="6112826at2759"/>
<dbReference type="Proteomes" id="UP000001811">
    <property type="component" value="Unplaced"/>
</dbReference>
<dbReference type="GO" id="GO:0034364">
    <property type="term" value="C:high-density lipoprotein particle"/>
    <property type="evidence" value="ECO:0007669"/>
    <property type="project" value="UniProtKB-KW"/>
</dbReference>
<dbReference type="GO" id="GO:0006953">
    <property type="term" value="P:acute-phase response"/>
    <property type="evidence" value="ECO:0007669"/>
    <property type="project" value="UniProtKB-KW"/>
</dbReference>
<dbReference type="FunFam" id="1.10.132.110:FF:000001">
    <property type="entry name" value="Serum amyloid A protein"/>
    <property type="match status" value="1"/>
</dbReference>
<dbReference type="Gene3D" id="1.10.132.110">
    <property type="entry name" value="Serum amyloid A protein"/>
    <property type="match status" value="1"/>
</dbReference>
<dbReference type="InterPro" id="IPR000096">
    <property type="entry name" value="Serum_amyloid_A"/>
</dbReference>
<dbReference type="InterPro" id="IPR052464">
    <property type="entry name" value="Synovial_Prolif_Regulator"/>
</dbReference>
<dbReference type="PANTHER" id="PTHR23424">
    <property type="entry name" value="SERUM AMYLOID A"/>
    <property type="match status" value="1"/>
</dbReference>
<dbReference type="PANTHER" id="PTHR23424:SF29">
    <property type="entry name" value="SERUM AMYLOID A PROTEIN"/>
    <property type="match status" value="1"/>
</dbReference>
<dbReference type="Pfam" id="PF00277">
    <property type="entry name" value="SAA"/>
    <property type="match status" value="1"/>
</dbReference>
<dbReference type="PIRSF" id="PIRSF002472">
    <property type="entry name" value="Serum_amyloid_A"/>
    <property type="match status" value="1"/>
</dbReference>
<dbReference type="PRINTS" id="PR00306">
    <property type="entry name" value="SERUMAMYLOID"/>
</dbReference>
<dbReference type="SMART" id="SM00197">
    <property type="entry name" value="SAA"/>
    <property type="match status" value="1"/>
</dbReference>
<dbReference type="PROSITE" id="PS00992">
    <property type="entry name" value="SAA"/>
    <property type="match status" value="1"/>
</dbReference>
<proteinExistence type="evidence at transcript level"/>